<feature type="signal peptide">
    <location>
        <begin position="1"/>
        <end position="21"/>
    </location>
</feature>
<feature type="chain" id="PRO_0000006401" description="Pupal cuticle protein Edg-91">
    <location>
        <begin position="22"/>
        <end position="159"/>
    </location>
</feature>
<feature type="sequence conflict" description="In Ref. 1; AAA28502/AAA28503." evidence="1" ref="1">
    <original>S</original>
    <variation>R</variation>
    <location>
        <position position="29"/>
    </location>
</feature>
<feature type="sequence conflict" description="In Ref. 1; AAA28502/AAA28503." evidence="1" ref="1">
    <original>H</original>
    <variation>Y</variation>
    <location>
        <position position="109"/>
    </location>
</feature>
<organism>
    <name type="scientific">Drosophila melanogaster</name>
    <name type="common">Fruit fly</name>
    <dbReference type="NCBI Taxonomy" id="7227"/>
    <lineage>
        <taxon>Eukaryota</taxon>
        <taxon>Metazoa</taxon>
        <taxon>Ecdysozoa</taxon>
        <taxon>Arthropoda</taxon>
        <taxon>Hexapoda</taxon>
        <taxon>Insecta</taxon>
        <taxon>Pterygota</taxon>
        <taxon>Neoptera</taxon>
        <taxon>Endopterygota</taxon>
        <taxon>Diptera</taxon>
        <taxon>Brachycera</taxon>
        <taxon>Muscomorpha</taxon>
        <taxon>Ephydroidea</taxon>
        <taxon>Drosophilidae</taxon>
        <taxon>Drosophila</taxon>
        <taxon>Sophophora</taxon>
    </lineage>
</organism>
<sequence length="159" mass="15260">MALVRVSCMLALLLIAGQGQAAPVKTEGSTLGLLGGGFGGSVGLSAGIGVGGGLYSGFGGGGYPGGYASGYPGGYGGGYSGYNGYGGSGFGGGYYPGGGYSGFGHRPHHHGGYYPGGGSYHNQGGSYGGHYSQSQYSNGYYGGGGYGGGGYGGNGFFGK</sequence>
<comment type="function">
    <text>Component of the pupal cuticle.</text>
</comment>
<comment type="tissue specificity">
    <text>Larval (posterior) and imaginal (anterior) epidermis.</text>
</comment>
<comment type="developmental stage">
    <text>Prepupal and early pupal stages.</text>
</comment>
<comment type="domain">
    <text>This protein is glycine-rich and contains several repeats of the motif (G/S)1-4(Y/F) like structural proteins from insect egg shells, egg cases and vertebrate cytokeratins.</text>
</comment>
<proteinExistence type="evidence at transcript level"/>
<keyword id="KW-0193">Cuticle</keyword>
<keyword id="KW-1185">Reference proteome</keyword>
<keyword id="KW-0732">Signal</keyword>
<gene>
    <name type="primary">Edg91</name>
    <name type="synonym">EDG-91</name>
    <name type="ORF">CG7539</name>
</gene>
<dbReference type="EMBL" id="M71250">
    <property type="protein sequence ID" value="AAA28502.1"/>
    <property type="molecule type" value="Genomic_DNA"/>
</dbReference>
<dbReference type="EMBL" id="M71251">
    <property type="protein sequence ID" value="AAA28503.1"/>
    <property type="molecule type" value="mRNA"/>
</dbReference>
<dbReference type="EMBL" id="AE014297">
    <property type="protein sequence ID" value="AAF55440.1"/>
    <property type="molecule type" value="Genomic_DNA"/>
</dbReference>
<dbReference type="PIR" id="C49773">
    <property type="entry name" value="C49773"/>
</dbReference>
<dbReference type="RefSeq" id="NP_524390.2">
    <property type="nucleotide sequence ID" value="NM_079666.3"/>
</dbReference>
<dbReference type="BioGRID" id="67149">
    <property type="interactions" value="1"/>
</dbReference>
<dbReference type="DIP" id="DIP-23842N"/>
<dbReference type="IntAct" id="P27781">
    <property type="interactions" value="1"/>
</dbReference>
<dbReference type="STRING" id="7227.FBpp0082926"/>
<dbReference type="PaxDb" id="7227-FBpp0082926"/>
<dbReference type="DNASU" id="42117"/>
<dbReference type="EnsemblMetazoa" id="FBtr0083502">
    <property type="protein sequence ID" value="FBpp0082926"/>
    <property type="gene ID" value="FBgn0004554"/>
</dbReference>
<dbReference type="GeneID" id="42117"/>
<dbReference type="KEGG" id="dme:Dmel_CG7539"/>
<dbReference type="AGR" id="FB:FBgn0004554"/>
<dbReference type="CTD" id="42117"/>
<dbReference type="FlyBase" id="FBgn0004554">
    <property type="gene designation" value="Edg91"/>
</dbReference>
<dbReference type="VEuPathDB" id="VectorBase:FBgn0004554"/>
<dbReference type="InParanoid" id="P27781"/>
<dbReference type="OMA" id="GHKPYYG"/>
<dbReference type="BioGRID-ORCS" id="42117">
    <property type="hits" value="0 hits in 1 CRISPR screen"/>
</dbReference>
<dbReference type="GenomeRNAi" id="42117"/>
<dbReference type="PRO" id="PR:P27781"/>
<dbReference type="Proteomes" id="UP000000803">
    <property type="component" value="Chromosome 3R"/>
</dbReference>
<dbReference type="Bgee" id="FBgn0004554">
    <property type="expression patterns" value="Expressed in adult tracheocyte (Drosophila) in open tracheal system trachea and 11 other cell types or tissues"/>
</dbReference>
<dbReference type="ExpressionAtlas" id="P27781">
    <property type="expression patterns" value="baseline and differential"/>
</dbReference>
<dbReference type="GO" id="GO:0008011">
    <property type="term" value="F:structural constituent of pupal chitin-based cuticle"/>
    <property type="evidence" value="ECO:0000304"/>
    <property type="project" value="FlyBase"/>
</dbReference>
<evidence type="ECO:0000305" key="1"/>
<name>CUP9_DROME</name>
<protein>
    <recommendedName>
        <fullName>Pupal cuticle protein Edg-91</fullName>
    </recommendedName>
    <alternativeName>
        <fullName>Ecdysone-dependent protein 91</fullName>
    </alternativeName>
</protein>
<reference key="1">
    <citation type="journal article" date="1991" name="Dev. Biol.">
        <title>20-Hydroxyecdysone is required for, and negatively regulates, transcription of Drosophila pupal cuticle protein genes.</title>
        <authorList>
            <person name="Apple R.T."/>
            <person name="Fristrom J.W."/>
        </authorList>
    </citation>
    <scope>NUCLEOTIDE SEQUENCE [GENOMIC DNA / MRNA]</scope>
    <source>
        <strain>Oregon-R</strain>
    </source>
</reference>
<reference key="2">
    <citation type="journal article" date="2000" name="Science">
        <title>The genome sequence of Drosophila melanogaster.</title>
        <authorList>
            <person name="Adams M.D."/>
            <person name="Celniker S.E."/>
            <person name="Holt R.A."/>
            <person name="Evans C.A."/>
            <person name="Gocayne J.D."/>
            <person name="Amanatides P.G."/>
            <person name="Scherer S.E."/>
            <person name="Li P.W."/>
            <person name="Hoskins R.A."/>
            <person name="Galle R.F."/>
            <person name="George R.A."/>
            <person name="Lewis S.E."/>
            <person name="Richards S."/>
            <person name="Ashburner M."/>
            <person name="Henderson S.N."/>
            <person name="Sutton G.G."/>
            <person name="Wortman J.R."/>
            <person name="Yandell M.D."/>
            <person name="Zhang Q."/>
            <person name="Chen L.X."/>
            <person name="Brandon R.C."/>
            <person name="Rogers Y.-H.C."/>
            <person name="Blazej R.G."/>
            <person name="Champe M."/>
            <person name="Pfeiffer B.D."/>
            <person name="Wan K.H."/>
            <person name="Doyle C."/>
            <person name="Baxter E.G."/>
            <person name="Helt G."/>
            <person name="Nelson C.R."/>
            <person name="Miklos G.L.G."/>
            <person name="Abril J.F."/>
            <person name="Agbayani A."/>
            <person name="An H.-J."/>
            <person name="Andrews-Pfannkoch C."/>
            <person name="Baldwin D."/>
            <person name="Ballew R.M."/>
            <person name="Basu A."/>
            <person name="Baxendale J."/>
            <person name="Bayraktaroglu L."/>
            <person name="Beasley E.M."/>
            <person name="Beeson K.Y."/>
            <person name="Benos P.V."/>
            <person name="Berman B.P."/>
            <person name="Bhandari D."/>
            <person name="Bolshakov S."/>
            <person name="Borkova D."/>
            <person name="Botchan M.R."/>
            <person name="Bouck J."/>
            <person name="Brokstein P."/>
            <person name="Brottier P."/>
            <person name="Burtis K.C."/>
            <person name="Busam D.A."/>
            <person name="Butler H."/>
            <person name="Cadieu E."/>
            <person name="Center A."/>
            <person name="Chandra I."/>
            <person name="Cherry J.M."/>
            <person name="Cawley S."/>
            <person name="Dahlke C."/>
            <person name="Davenport L.B."/>
            <person name="Davies P."/>
            <person name="de Pablos B."/>
            <person name="Delcher A."/>
            <person name="Deng Z."/>
            <person name="Mays A.D."/>
            <person name="Dew I."/>
            <person name="Dietz S.M."/>
            <person name="Dodson K."/>
            <person name="Doup L.E."/>
            <person name="Downes M."/>
            <person name="Dugan-Rocha S."/>
            <person name="Dunkov B.C."/>
            <person name="Dunn P."/>
            <person name="Durbin K.J."/>
            <person name="Evangelista C.C."/>
            <person name="Ferraz C."/>
            <person name="Ferriera S."/>
            <person name="Fleischmann W."/>
            <person name="Fosler C."/>
            <person name="Gabrielian A.E."/>
            <person name="Garg N.S."/>
            <person name="Gelbart W.M."/>
            <person name="Glasser K."/>
            <person name="Glodek A."/>
            <person name="Gong F."/>
            <person name="Gorrell J.H."/>
            <person name="Gu Z."/>
            <person name="Guan P."/>
            <person name="Harris M."/>
            <person name="Harris N.L."/>
            <person name="Harvey D.A."/>
            <person name="Heiman T.J."/>
            <person name="Hernandez J.R."/>
            <person name="Houck J."/>
            <person name="Hostin D."/>
            <person name="Houston K.A."/>
            <person name="Howland T.J."/>
            <person name="Wei M.-H."/>
            <person name="Ibegwam C."/>
            <person name="Jalali M."/>
            <person name="Kalush F."/>
            <person name="Karpen G.H."/>
            <person name="Ke Z."/>
            <person name="Kennison J.A."/>
            <person name="Ketchum K.A."/>
            <person name="Kimmel B.E."/>
            <person name="Kodira C.D."/>
            <person name="Kraft C.L."/>
            <person name="Kravitz S."/>
            <person name="Kulp D."/>
            <person name="Lai Z."/>
            <person name="Lasko P."/>
            <person name="Lei Y."/>
            <person name="Levitsky A.A."/>
            <person name="Li J.H."/>
            <person name="Li Z."/>
            <person name="Liang Y."/>
            <person name="Lin X."/>
            <person name="Liu X."/>
            <person name="Mattei B."/>
            <person name="McIntosh T.C."/>
            <person name="McLeod M.P."/>
            <person name="McPherson D."/>
            <person name="Merkulov G."/>
            <person name="Milshina N.V."/>
            <person name="Mobarry C."/>
            <person name="Morris J."/>
            <person name="Moshrefi A."/>
            <person name="Mount S.M."/>
            <person name="Moy M."/>
            <person name="Murphy B."/>
            <person name="Murphy L."/>
            <person name="Muzny D.M."/>
            <person name="Nelson D.L."/>
            <person name="Nelson D.R."/>
            <person name="Nelson K.A."/>
            <person name="Nixon K."/>
            <person name="Nusskern D.R."/>
            <person name="Pacleb J.M."/>
            <person name="Palazzolo M."/>
            <person name="Pittman G.S."/>
            <person name="Pan S."/>
            <person name="Pollard J."/>
            <person name="Puri V."/>
            <person name="Reese M.G."/>
            <person name="Reinert K."/>
            <person name="Remington K."/>
            <person name="Saunders R.D.C."/>
            <person name="Scheeler F."/>
            <person name="Shen H."/>
            <person name="Shue B.C."/>
            <person name="Siden-Kiamos I."/>
            <person name="Simpson M."/>
            <person name="Skupski M.P."/>
            <person name="Smith T.J."/>
            <person name="Spier E."/>
            <person name="Spradling A.C."/>
            <person name="Stapleton M."/>
            <person name="Strong R."/>
            <person name="Sun E."/>
            <person name="Svirskas R."/>
            <person name="Tector C."/>
            <person name="Turner R."/>
            <person name="Venter E."/>
            <person name="Wang A.H."/>
            <person name="Wang X."/>
            <person name="Wang Z.-Y."/>
            <person name="Wassarman D.A."/>
            <person name="Weinstock G.M."/>
            <person name="Weissenbach J."/>
            <person name="Williams S.M."/>
            <person name="Woodage T."/>
            <person name="Worley K.C."/>
            <person name="Wu D."/>
            <person name="Yang S."/>
            <person name="Yao Q.A."/>
            <person name="Ye J."/>
            <person name="Yeh R.-F."/>
            <person name="Zaveri J.S."/>
            <person name="Zhan M."/>
            <person name="Zhang G."/>
            <person name="Zhao Q."/>
            <person name="Zheng L."/>
            <person name="Zheng X.H."/>
            <person name="Zhong F.N."/>
            <person name="Zhong W."/>
            <person name="Zhou X."/>
            <person name="Zhu S.C."/>
            <person name="Zhu X."/>
            <person name="Smith H.O."/>
            <person name="Gibbs R.A."/>
            <person name="Myers E.W."/>
            <person name="Rubin G.M."/>
            <person name="Venter J.C."/>
        </authorList>
    </citation>
    <scope>NUCLEOTIDE SEQUENCE [LARGE SCALE GENOMIC DNA]</scope>
    <source>
        <strain>Berkeley</strain>
    </source>
</reference>
<reference key="3">
    <citation type="journal article" date="2002" name="Genome Biol.">
        <title>Annotation of the Drosophila melanogaster euchromatic genome: a systematic review.</title>
        <authorList>
            <person name="Misra S."/>
            <person name="Crosby M.A."/>
            <person name="Mungall C.J."/>
            <person name="Matthews B.B."/>
            <person name="Campbell K.S."/>
            <person name="Hradecky P."/>
            <person name="Huang Y."/>
            <person name="Kaminker J.S."/>
            <person name="Millburn G.H."/>
            <person name="Prochnik S.E."/>
            <person name="Smith C.D."/>
            <person name="Tupy J.L."/>
            <person name="Whitfield E.J."/>
            <person name="Bayraktaroglu L."/>
            <person name="Berman B.P."/>
            <person name="Bettencourt B.R."/>
            <person name="Celniker S.E."/>
            <person name="de Grey A.D.N.J."/>
            <person name="Drysdale R.A."/>
            <person name="Harris N.L."/>
            <person name="Richter J."/>
            <person name="Russo S."/>
            <person name="Schroeder A.J."/>
            <person name="Shu S.Q."/>
            <person name="Stapleton M."/>
            <person name="Yamada C."/>
            <person name="Ashburner M."/>
            <person name="Gelbart W.M."/>
            <person name="Rubin G.M."/>
            <person name="Lewis S.E."/>
        </authorList>
    </citation>
    <scope>GENOME REANNOTATION</scope>
    <source>
        <strain>Berkeley</strain>
    </source>
</reference>
<accession>P27781</accession>
<accession>Q9VEI1</accession>